<organism>
    <name type="scientific">Escherichia fergusonii (strain ATCC 35469 / DSM 13698 / CCUG 18766 / IAM 14443 / JCM 21226 / LMG 7866 / NBRC 102419 / NCTC 12128 / CDC 0568-73)</name>
    <dbReference type="NCBI Taxonomy" id="585054"/>
    <lineage>
        <taxon>Bacteria</taxon>
        <taxon>Pseudomonadati</taxon>
        <taxon>Pseudomonadota</taxon>
        <taxon>Gammaproteobacteria</taxon>
        <taxon>Enterobacterales</taxon>
        <taxon>Enterobacteriaceae</taxon>
        <taxon>Escherichia</taxon>
    </lineage>
</organism>
<accession>B7LNK6</accession>
<feature type="chain" id="PRO_0000369716" description="Ribosomal RNA small subunit methyltransferase C">
    <location>
        <begin position="1"/>
        <end position="343"/>
    </location>
</feature>
<sequence length="343" mass="37684">MSAFTPASEVLLRHSDDFEQSRILFAGDLQDDLPARLDTAASRAHTQQFHHWQVLSRQMGDNARFSLVATADDVADCDTLIYYWPKNKPEAQFQLMNLLSLLPVGTDIFVVGENRSGVRSAEQMLADYAPLNKVDSARRCGLYFGRLEKQPMFDADKFWGEYNVDGLTVKTLPGVFSRDGLDVGSQLLLSTLTPHTKGKVLDVGCGAGVLSVAFARHSPKIRLTLCDVSAPAVEASRATLAANGIEGEVFASNVFSEVKGRFDMIISNPPFHDGMQTSLDAAQTLIRGAVRHLNSGGELRIVANAFLPYPDVLDETFGFHEVIAQTGRFKVYRAIMTRQAKKG</sequence>
<gene>
    <name evidence="1" type="primary">rsmC</name>
    <name type="ordered locus">EFER_4412</name>
</gene>
<comment type="function">
    <text evidence="1">Specifically methylates the guanine in position 1207 of 16S rRNA in the 30S particle.</text>
</comment>
<comment type="catalytic activity">
    <reaction evidence="1">
        <text>guanosine(1207) in 16S rRNA + S-adenosyl-L-methionine = N(2)-methylguanosine(1207) in 16S rRNA + S-adenosyl-L-homocysteine + H(+)</text>
        <dbReference type="Rhea" id="RHEA:42736"/>
        <dbReference type="Rhea" id="RHEA-COMP:10213"/>
        <dbReference type="Rhea" id="RHEA-COMP:10214"/>
        <dbReference type="ChEBI" id="CHEBI:15378"/>
        <dbReference type="ChEBI" id="CHEBI:57856"/>
        <dbReference type="ChEBI" id="CHEBI:59789"/>
        <dbReference type="ChEBI" id="CHEBI:74269"/>
        <dbReference type="ChEBI" id="CHEBI:74481"/>
        <dbReference type="EC" id="2.1.1.172"/>
    </reaction>
</comment>
<comment type="subunit">
    <text evidence="1">Monomer.</text>
</comment>
<comment type="subcellular location">
    <subcellularLocation>
        <location evidence="1">Cytoplasm</location>
    </subcellularLocation>
</comment>
<comment type="similarity">
    <text evidence="1">Belongs to the methyltransferase superfamily. RsmC family.</text>
</comment>
<reference key="1">
    <citation type="journal article" date="2009" name="PLoS Genet.">
        <title>Organised genome dynamics in the Escherichia coli species results in highly diverse adaptive paths.</title>
        <authorList>
            <person name="Touchon M."/>
            <person name="Hoede C."/>
            <person name="Tenaillon O."/>
            <person name="Barbe V."/>
            <person name="Baeriswyl S."/>
            <person name="Bidet P."/>
            <person name="Bingen E."/>
            <person name="Bonacorsi S."/>
            <person name="Bouchier C."/>
            <person name="Bouvet O."/>
            <person name="Calteau A."/>
            <person name="Chiapello H."/>
            <person name="Clermont O."/>
            <person name="Cruveiller S."/>
            <person name="Danchin A."/>
            <person name="Diard M."/>
            <person name="Dossat C."/>
            <person name="Karoui M.E."/>
            <person name="Frapy E."/>
            <person name="Garry L."/>
            <person name="Ghigo J.M."/>
            <person name="Gilles A.M."/>
            <person name="Johnson J."/>
            <person name="Le Bouguenec C."/>
            <person name="Lescat M."/>
            <person name="Mangenot S."/>
            <person name="Martinez-Jehanne V."/>
            <person name="Matic I."/>
            <person name="Nassif X."/>
            <person name="Oztas S."/>
            <person name="Petit M.A."/>
            <person name="Pichon C."/>
            <person name="Rouy Z."/>
            <person name="Ruf C.S."/>
            <person name="Schneider D."/>
            <person name="Tourret J."/>
            <person name="Vacherie B."/>
            <person name="Vallenet D."/>
            <person name="Medigue C."/>
            <person name="Rocha E.P.C."/>
            <person name="Denamur E."/>
        </authorList>
    </citation>
    <scope>NUCLEOTIDE SEQUENCE [LARGE SCALE GENOMIC DNA]</scope>
    <source>
        <strain>ATCC 35469 / DSM 13698 / BCRC 15582 / CCUG 18766 / IAM 14443 / JCM 21226 / LMG 7866 / NBRC 102419 / NCTC 12128 / CDC 0568-73</strain>
    </source>
</reference>
<keyword id="KW-0963">Cytoplasm</keyword>
<keyword id="KW-0489">Methyltransferase</keyword>
<keyword id="KW-0698">rRNA processing</keyword>
<keyword id="KW-0949">S-adenosyl-L-methionine</keyword>
<keyword id="KW-0808">Transferase</keyword>
<name>RSMC_ESCF3</name>
<evidence type="ECO:0000255" key="1">
    <source>
        <dbReference type="HAMAP-Rule" id="MF_01862"/>
    </source>
</evidence>
<protein>
    <recommendedName>
        <fullName evidence="1">Ribosomal RNA small subunit methyltransferase C</fullName>
        <ecNumber evidence="1">2.1.1.172</ecNumber>
    </recommendedName>
    <alternativeName>
        <fullName evidence="1">16S rRNA m2G1207 methyltransferase</fullName>
    </alternativeName>
    <alternativeName>
        <fullName evidence="1">rRNA (guanine-N(2)-)-methyltransferase RsmC</fullName>
    </alternativeName>
</protein>
<dbReference type="EC" id="2.1.1.172" evidence="1"/>
<dbReference type="EMBL" id="CU928158">
    <property type="protein sequence ID" value="CAQ91825.1"/>
    <property type="molecule type" value="Genomic_DNA"/>
</dbReference>
<dbReference type="RefSeq" id="WP_001272310.1">
    <property type="nucleotide sequence ID" value="NC_011740.1"/>
</dbReference>
<dbReference type="SMR" id="B7LNK6"/>
<dbReference type="GeneID" id="75059005"/>
<dbReference type="KEGG" id="efe:EFER_4412"/>
<dbReference type="HOGENOM" id="CLU_049581_0_1_6"/>
<dbReference type="OrthoDB" id="9816072at2"/>
<dbReference type="Proteomes" id="UP000000745">
    <property type="component" value="Chromosome"/>
</dbReference>
<dbReference type="GO" id="GO:0005737">
    <property type="term" value="C:cytoplasm"/>
    <property type="evidence" value="ECO:0007669"/>
    <property type="project" value="UniProtKB-SubCell"/>
</dbReference>
<dbReference type="GO" id="GO:0052914">
    <property type="term" value="F:16S rRNA (guanine(1207)-N(2))-methyltransferase activity"/>
    <property type="evidence" value="ECO:0007669"/>
    <property type="project" value="UniProtKB-EC"/>
</dbReference>
<dbReference type="GO" id="GO:0003676">
    <property type="term" value="F:nucleic acid binding"/>
    <property type="evidence" value="ECO:0007669"/>
    <property type="project" value="InterPro"/>
</dbReference>
<dbReference type="CDD" id="cd02440">
    <property type="entry name" value="AdoMet_MTases"/>
    <property type="match status" value="1"/>
</dbReference>
<dbReference type="FunFam" id="3.40.50.150:FF:000058">
    <property type="entry name" value="Ribosomal RNA small subunit methyltransferase C"/>
    <property type="match status" value="1"/>
</dbReference>
<dbReference type="FunFam" id="3.40.50.150:FF:000063">
    <property type="entry name" value="Ribosomal RNA small subunit methyltransferase C"/>
    <property type="match status" value="1"/>
</dbReference>
<dbReference type="Gene3D" id="3.40.50.150">
    <property type="entry name" value="Vaccinia Virus protein VP39"/>
    <property type="match status" value="2"/>
</dbReference>
<dbReference type="HAMAP" id="MF_01862">
    <property type="entry name" value="16SrRNA_methyltr_C"/>
    <property type="match status" value="1"/>
</dbReference>
<dbReference type="InterPro" id="IPR002052">
    <property type="entry name" value="DNA_methylase_N6_adenine_CS"/>
</dbReference>
<dbReference type="InterPro" id="IPR013675">
    <property type="entry name" value="Mtase_sm_N"/>
</dbReference>
<dbReference type="InterPro" id="IPR023543">
    <property type="entry name" value="rRNA_ssu_MeTfrase_C"/>
</dbReference>
<dbReference type="InterPro" id="IPR046977">
    <property type="entry name" value="RsmC/RlmG"/>
</dbReference>
<dbReference type="InterPro" id="IPR029063">
    <property type="entry name" value="SAM-dependent_MTases_sf"/>
</dbReference>
<dbReference type="InterPro" id="IPR007848">
    <property type="entry name" value="Small_mtfrase_dom"/>
</dbReference>
<dbReference type="NCBIfam" id="NF007023">
    <property type="entry name" value="PRK09489.1"/>
    <property type="match status" value="1"/>
</dbReference>
<dbReference type="PANTHER" id="PTHR47816">
    <property type="entry name" value="RIBOSOMAL RNA SMALL SUBUNIT METHYLTRANSFERASE C"/>
    <property type="match status" value="1"/>
</dbReference>
<dbReference type="PANTHER" id="PTHR47816:SF4">
    <property type="entry name" value="RIBOSOMAL RNA SMALL SUBUNIT METHYLTRANSFERASE C"/>
    <property type="match status" value="1"/>
</dbReference>
<dbReference type="Pfam" id="PF05175">
    <property type="entry name" value="MTS"/>
    <property type="match status" value="1"/>
</dbReference>
<dbReference type="Pfam" id="PF08468">
    <property type="entry name" value="MTS_N"/>
    <property type="match status" value="1"/>
</dbReference>
<dbReference type="SUPFAM" id="SSF53335">
    <property type="entry name" value="S-adenosyl-L-methionine-dependent methyltransferases"/>
    <property type="match status" value="1"/>
</dbReference>
<proteinExistence type="inferred from homology"/>